<name>SCP42_ARATH</name>
<protein>
    <recommendedName>
        <fullName>Serine carboxypeptidase-like 42</fullName>
        <ecNumber>3.4.16.-</ecNumber>
    </recommendedName>
</protein>
<evidence type="ECO:0000250" key="1"/>
<evidence type="ECO:0000255" key="2"/>
<evidence type="ECO:0000255" key="3">
    <source>
        <dbReference type="PROSITE-ProRule" id="PRU10074"/>
    </source>
</evidence>
<evidence type="ECO:0000269" key="4">
    <source>
    </source>
</evidence>
<evidence type="ECO:0000305" key="5"/>
<dbReference type="EC" id="3.4.16.-"/>
<dbReference type="EMBL" id="AB023032">
    <property type="protein sequence ID" value="BAB10197.1"/>
    <property type="molecule type" value="Genomic_DNA"/>
</dbReference>
<dbReference type="EMBL" id="CP002688">
    <property type="protein sequence ID" value="AED94786.1"/>
    <property type="molecule type" value="Genomic_DNA"/>
</dbReference>
<dbReference type="EMBL" id="AF361604">
    <property type="protein sequence ID" value="AAK32772.1"/>
    <property type="molecule type" value="mRNA"/>
</dbReference>
<dbReference type="EMBL" id="AY143899">
    <property type="protein sequence ID" value="AAN28838.1"/>
    <property type="molecule type" value="mRNA"/>
</dbReference>
<dbReference type="RefSeq" id="NP_199039.1">
    <property type="nucleotide sequence ID" value="NM_123589.4"/>
</dbReference>
<dbReference type="SMR" id="Q9FH05"/>
<dbReference type="BioGRID" id="19479">
    <property type="interactions" value="1"/>
</dbReference>
<dbReference type="FunCoup" id="Q9FH05">
    <property type="interactions" value="328"/>
</dbReference>
<dbReference type="IntAct" id="Q9FH05">
    <property type="interactions" value="1"/>
</dbReference>
<dbReference type="STRING" id="3702.Q9FH05"/>
<dbReference type="ESTHER" id="arath-SCP42">
    <property type="family name" value="Carboxypeptidase_S10"/>
</dbReference>
<dbReference type="MEROPS" id="S10.A21"/>
<dbReference type="GlyCosmos" id="Q9FH05">
    <property type="glycosylation" value="5 sites, No reported glycans"/>
</dbReference>
<dbReference type="GlyGen" id="Q9FH05">
    <property type="glycosylation" value="5 sites"/>
</dbReference>
<dbReference type="PaxDb" id="3702-AT5G42240.1"/>
<dbReference type="ProteomicsDB" id="226610"/>
<dbReference type="EnsemblPlants" id="AT5G42240.1">
    <property type="protein sequence ID" value="AT5G42240.1"/>
    <property type="gene ID" value="AT5G42240"/>
</dbReference>
<dbReference type="GeneID" id="834229"/>
<dbReference type="Gramene" id="AT5G42240.1">
    <property type="protein sequence ID" value="AT5G42240.1"/>
    <property type="gene ID" value="AT5G42240"/>
</dbReference>
<dbReference type="KEGG" id="ath:AT5G42240"/>
<dbReference type="Araport" id="AT5G42240"/>
<dbReference type="TAIR" id="AT5G42240">
    <property type="gene designation" value="SCPL42"/>
</dbReference>
<dbReference type="eggNOG" id="KOG1282">
    <property type="taxonomic scope" value="Eukaryota"/>
</dbReference>
<dbReference type="HOGENOM" id="CLU_008523_13_1_1"/>
<dbReference type="InParanoid" id="Q9FH05"/>
<dbReference type="OMA" id="CMTYERY"/>
<dbReference type="PhylomeDB" id="Q9FH05"/>
<dbReference type="PRO" id="PR:Q9FH05"/>
<dbReference type="Proteomes" id="UP000006548">
    <property type="component" value="Chromosome 5"/>
</dbReference>
<dbReference type="ExpressionAtlas" id="Q9FH05">
    <property type="expression patterns" value="baseline and differential"/>
</dbReference>
<dbReference type="GO" id="GO:0005576">
    <property type="term" value="C:extracellular region"/>
    <property type="evidence" value="ECO:0007669"/>
    <property type="project" value="UniProtKB-SubCell"/>
</dbReference>
<dbReference type="GO" id="GO:0004185">
    <property type="term" value="F:serine-type carboxypeptidase activity"/>
    <property type="evidence" value="ECO:0007669"/>
    <property type="project" value="InterPro"/>
</dbReference>
<dbReference type="GO" id="GO:0006508">
    <property type="term" value="P:proteolysis"/>
    <property type="evidence" value="ECO:0007669"/>
    <property type="project" value="UniProtKB-KW"/>
</dbReference>
<dbReference type="FunFam" id="3.40.50.11320:FF:000005">
    <property type="entry name" value="Carboxypeptidase"/>
    <property type="match status" value="1"/>
</dbReference>
<dbReference type="FunFam" id="3.40.50.1820:FF:000030">
    <property type="entry name" value="Carboxypeptidase"/>
    <property type="match status" value="1"/>
</dbReference>
<dbReference type="Gene3D" id="3.40.50.11320">
    <property type="match status" value="1"/>
</dbReference>
<dbReference type="Gene3D" id="6.10.250.940">
    <property type="match status" value="1"/>
</dbReference>
<dbReference type="Gene3D" id="3.40.50.1820">
    <property type="entry name" value="alpha/beta hydrolase"/>
    <property type="match status" value="1"/>
</dbReference>
<dbReference type="InterPro" id="IPR029058">
    <property type="entry name" value="AB_hydrolase_fold"/>
</dbReference>
<dbReference type="InterPro" id="IPR001563">
    <property type="entry name" value="Peptidase_S10"/>
</dbReference>
<dbReference type="InterPro" id="IPR018202">
    <property type="entry name" value="Ser_caboxypep_ser_AS"/>
</dbReference>
<dbReference type="PANTHER" id="PTHR11802:SF20">
    <property type="entry name" value="SERINE CARBOXYPEPTIDASE-LIKE 41-RELATED"/>
    <property type="match status" value="1"/>
</dbReference>
<dbReference type="PANTHER" id="PTHR11802">
    <property type="entry name" value="SERINE PROTEASE FAMILY S10 SERINE CARBOXYPEPTIDASE"/>
    <property type="match status" value="1"/>
</dbReference>
<dbReference type="Pfam" id="PF00450">
    <property type="entry name" value="Peptidase_S10"/>
    <property type="match status" value="1"/>
</dbReference>
<dbReference type="PRINTS" id="PR00724">
    <property type="entry name" value="CRBOXYPTASEC"/>
</dbReference>
<dbReference type="SUPFAM" id="SSF53474">
    <property type="entry name" value="alpha/beta-Hydrolases"/>
    <property type="match status" value="1"/>
</dbReference>
<dbReference type="PROSITE" id="PS00131">
    <property type="entry name" value="CARBOXYPEPT_SER_SER"/>
    <property type="match status" value="1"/>
</dbReference>
<sequence>MASVSWRAVAVAMVVVLLSLQWFAKGYPEEDLVVRLPGQPTVGFKQYAGYVDVDVKAGRSLFYYYVEAVKQPDSKPLTLWLNGGPGCSSIGGGAFTELGPFYPTGDGRGLRVNSMSWNKASHLLFVESPAGVGWSYSNKSSDYNTGDKSTANDMLVFLLRWFEKFPKLKSRDLFLTGESYAGHYIPQLADAILSYNSHSSGFKFNIKGVAIGNPLLKLDRDSPATYEFFWSHGMISDELKLTITSQCDFDDYTFASPHNVSTACNEAISETENIITEYVNNYDVLLDVCYPSIVQQELRLKKMATKMSMGVDVCMTYERRFYFNLPEVQKALHANRTHLPYSWSMCSGVLNYSDIDGNIDMLPILKRIILNKTPIWIFSGDQDSVVPFGGSRTLVRELAQDLNFKTTVPYGAWFHKSQVGGWAIEYGKLLTFATVRGAAHMVPYAQPSRALHLFSSFVSGRRLPNNTHSSTDE</sequence>
<accession>Q9FH05</accession>
<reference key="1">
    <citation type="journal article" date="2000" name="DNA Res.">
        <title>Structural analysis of Arabidopsis thaliana chromosome 5. X. Sequence features of the regions of 3,076,755 bp covered by sixty P1 and TAC clones.</title>
        <authorList>
            <person name="Sato S."/>
            <person name="Nakamura Y."/>
            <person name="Kaneko T."/>
            <person name="Katoh T."/>
            <person name="Asamizu E."/>
            <person name="Kotani H."/>
            <person name="Tabata S."/>
        </authorList>
    </citation>
    <scope>NUCLEOTIDE SEQUENCE [LARGE SCALE GENOMIC DNA]</scope>
    <source>
        <strain>cv. Columbia</strain>
    </source>
</reference>
<reference key="2">
    <citation type="journal article" date="2017" name="Plant J.">
        <title>Araport11: a complete reannotation of the Arabidopsis thaliana reference genome.</title>
        <authorList>
            <person name="Cheng C.Y."/>
            <person name="Krishnakumar V."/>
            <person name="Chan A.P."/>
            <person name="Thibaud-Nissen F."/>
            <person name="Schobel S."/>
            <person name="Town C.D."/>
        </authorList>
    </citation>
    <scope>GENOME REANNOTATION</scope>
    <source>
        <strain>cv. Columbia</strain>
    </source>
</reference>
<reference key="3">
    <citation type="journal article" date="2003" name="Science">
        <title>Empirical analysis of transcriptional activity in the Arabidopsis genome.</title>
        <authorList>
            <person name="Yamada K."/>
            <person name="Lim J."/>
            <person name="Dale J.M."/>
            <person name="Chen H."/>
            <person name="Shinn P."/>
            <person name="Palm C.J."/>
            <person name="Southwick A.M."/>
            <person name="Wu H.C."/>
            <person name="Kim C.J."/>
            <person name="Nguyen M."/>
            <person name="Pham P.K."/>
            <person name="Cheuk R.F."/>
            <person name="Karlin-Newmann G."/>
            <person name="Liu S.X."/>
            <person name="Lam B."/>
            <person name="Sakano H."/>
            <person name="Wu T."/>
            <person name="Yu G."/>
            <person name="Miranda M."/>
            <person name="Quach H.L."/>
            <person name="Tripp M."/>
            <person name="Chang C.H."/>
            <person name="Lee J.M."/>
            <person name="Toriumi M.J."/>
            <person name="Chan M.M."/>
            <person name="Tang C.C."/>
            <person name="Onodera C.S."/>
            <person name="Deng J.M."/>
            <person name="Akiyama K."/>
            <person name="Ansari Y."/>
            <person name="Arakawa T."/>
            <person name="Banh J."/>
            <person name="Banno F."/>
            <person name="Bowser L."/>
            <person name="Brooks S.Y."/>
            <person name="Carninci P."/>
            <person name="Chao Q."/>
            <person name="Choy N."/>
            <person name="Enju A."/>
            <person name="Goldsmith A.D."/>
            <person name="Gurjal M."/>
            <person name="Hansen N.F."/>
            <person name="Hayashizaki Y."/>
            <person name="Johnson-Hopson C."/>
            <person name="Hsuan V.W."/>
            <person name="Iida K."/>
            <person name="Karnes M."/>
            <person name="Khan S."/>
            <person name="Koesema E."/>
            <person name="Ishida J."/>
            <person name="Jiang P.X."/>
            <person name="Jones T."/>
            <person name="Kawai J."/>
            <person name="Kamiya A."/>
            <person name="Meyers C."/>
            <person name="Nakajima M."/>
            <person name="Narusaka M."/>
            <person name="Seki M."/>
            <person name="Sakurai T."/>
            <person name="Satou M."/>
            <person name="Tamse R."/>
            <person name="Vaysberg M."/>
            <person name="Wallender E.K."/>
            <person name="Wong C."/>
            <person name="Yamamura Y."/>
            <person name="Yuan S."/>
            <person name="Shinozaki K."/>
            <person name="Davis R.W."/>
            <person name="Theologis A."/>
            <person name="Ecker J.R."/>
        </authorList>
    </citation>
    <scope>NUCLEOTIDE SEQUENCE [LARGE SCALE MRNA]</scope>
    <source>
        <strain>cv. Columbia</strain>
    </source>
</reference>
<reference key="4">
    <citation type="journal article" date="2005" name="Plant Physiol.">
        <title>An expression and bioinformatics analysis of the Arabidopsis serine carboxypeptidase-like gene family.</title>
        <authorList>
            <person name="Fraser C.M."/>
            <person name="Rider L.W."/>
            <person name="Chapple C."/>
        </authorList>
    </citation>
    <scope>GENE FAMILY</scope>
    <scope>TISSUE SPECIFICITY</scope>
    <scope>NOMENCLATURE</scope>
</reference>
<comment type="function">
    <text evidence="1">Probable carboxypeptidase.</text>
</comment>
<comment type="subcellular location">
    <subcellularLocation>
        <location evidence="5">Secreted</location>
    </subcellularLocation>
</comment>
<comment type="tissue specificity">
    <text evidence="4">Expression not detected.</text>
</comment>
<comment type="similarity">
    <text evidence="5">Belongs to the peptidase S10 family.</text>
</comment>
<gene>
    <name type="primary">SCPL42</name>
    <name type="ordered locus">At5g42240</name>
    <name type="ORF">K5J14.4</name>
</gene>
<keyword id="KW-0121">Carboxypeptidase</keyword>
<keyword id="KW-1015">Disulfide bond</keyword>
<keyword id="KW-0325">Glycoprotein</keyword>
<keyword id="KW-0378">Hydrolase</keyword>
<keyword id="KW-0645">Protease</keyword>
<keyword id="KW-1185">Reference proteome</keyword>
<keyword id="KW-0964">Secreted</keyword>
<keyword id="KW-0732">Signal</keyword>
<proteinExistence type="evidence at transcript level"/>
<feature type="signal peptide" evidence="2">
    <location>
        <begin position="1"/>
        <end position="26"/>
    </location>
</feature>
<feature type="chain" id="PRO_0000274657" description="Serine carboxypeptidase-like 42">
    <location>
        <begin position="27"/>
        <end position="473"/>
    </location>
</feature>
<feature type="active site" evidence="3">
    <location>
        <position position="179"/>
    </location>
</feature>
<feature type="active site" evidence="3">
    <location>
        <position position="383"/>
    </location>
</feature>
<feature type="active site" evidence="3">
    <location>
        <position position="440"/>
    </location>
</feature>
<feature type="glycosylation site" description="N-linked (GlcNAc...) asparagine" evidence="2">
    <location>
        <position position="138"/>
    </location>
</feature>
<feature type="glycosylation site" description="N-linked (GlcNAc...) asparagine" evidence="2">
    <location>
        <position position="259"/>
    </location>
</feature>
<feature type="glycosylation site" description="N-linked (GlcNAc...) asparagine" evidence="2">
    <location>
        <position position="335"/>
    </location>
</feature>
<feature type="glycosylation site" description="N-linked (GlcNAc...) asparagine" evidence="2">
    <location>
        <position position="351"/>
    </location>
</feature>
<feature type="glycosylation site" description="N-linked (GlcNAc...) asparagine" evidence="2">
    <location>
        <position position="465"/>
    </location>
</feature>
<feature type="disulfide bond" evidence="1">
    <location>
        <begin position="87"/>
        <end position="346"/>
    </location>
</feature>
<feature type="disulfide bond" evidence="1">
    <location>
        <begin position="247"/>
        <end position="264"/>
    </location>
</feature>
<feature type="disulfide bond" evidence="1">
    <location>
        <begin position="289"/>
        <end position="314"/>
    </location>
</feature>
<organism>
    <name type="scientific">Arabidopsis thaliana</name>
    <name type="common">Mouse-ear cress</name>
    <dbReference type="NCBI Taxonomy" id="3702"/>
    <lineage>
        <taxon>Eukaryota</taxon>
        <taxon>Viridiplantae</taxon>
        <taxon>Streptophyta</taxon>
        <taxon>Embryophyta</taxon>
        <taxon>Tracheophyta</taxon>
        <taxon>Spermatophyta</taxon>
        <taxon>Magnoliopsida</taxon>
        <taxon>eudicotyledons</taxon>
        <taxon>Gunneridae</taxon>
        <taxon>Pentapetalae</taxon>
        <taxon>rosids</taxon>
        <taxon>malvids</taxon>
        <taxon>Brassicales</taxon>
        <taxon>Brassicaceae</taxon>
        <taxon>Camelineae</taxon>
        <taxon>Arabidopsis</taxon>
    </lineage>
</organism>